<name>TSAD_MANSM</name>
<organism>
    <name type="scientific">Mannheimia succiniciproducens (strain KCTC 0769BP / MBEL55E)</name>
    <dbReference type="NCBI Taxonomy" id="221988"/>
    <lineage>
        <taxon>Bacteria</taxon>
        <taxon>Pseudomonadati</taxon>
        <taxon>Pseudomonadota</taxon>
        <taxon>Gammaproteobacteria</taxon>
        <taxon>Pasteurellales</taxon>
        <taxon>Pasteurellaceae</taxon>
        <taxon>Basfia</taxon>
    </lineage>
</organism>
<sequence length="344" mass="37012">MRILGIETSCDETGVAIYDEDKGLIANQLYTQIALHADYGGVVPELASRDHIRKTAPLIEAALQEANLTAKDIDGIAYTCGPGLVGALLVGSTIARSLAYAWNVPAVGVHHMEGHLLAPMLEDADNRPQFPFIALLVSGGHTQLVKVEGVGKYEVMGESIDDAAGEAFDKTAKLLGLDYPGGAALSRLAEKGSAGRFVFPKPMTDRPGLDFSFSGLKTFAANTINQAIKNEGELSEQTKADIAHAFQTAVVETLAIKCKRALKETGYKRLVIAGGVSANKQLRQGLANLMDDLKGRVFYPAPQFCTDNGAMISYVGYLRLKHGERTDLAIEVKPRWPMIELEAI</sequence>
<proteinExistence type="inferred from homology"/>
<evidence type="ECO:0000255" key="1">
    <source>
        <dbReference type="HAMAP-Rule" id="MF_01445"/>
    </source>
</evidence>
<keyword id="KW-0012">Acyltransferase</keyword>
<keyword id="KW-0963">Cytoplasm</keyword>
<keyword id="KW-0408">Iron</keyword>
<keyword id="KW-0479">Metal-binding</keyword>
<keyword id="KW-0808">Transferase</keyword>
<keyword id="KW-0819">tRNA processing</keyword>
<reference key="1">
    <citation type="journal article" date="2004" name="Nat. Biotechnol.">
        <title>The genome sequence of the capnophilic rumen bacterium Mannheimia succiniciproducens.</title>
        <authorList>
            <person name="Hong S.H."/>
            <person name="Kim J.S."/>
            <person name="Lee S.Y."/>
            <person name="In Y.H."/>
            <person name="Choi S.S."/>
            <person name="Rih J.-K."/>
            <person name="Kim C.H."/>
            <person name="Jeong H."/>
            <person name="Hur C.G."/>
            <person name="Kim J.J."/>
        </authorList>
    </citation>
    <scope>NUCLEOTIDE SEQUENCE [LARGE SCALE GENOMIC DNA]</scope>
    <source>
        <strain>KCTC 0769BP / MBEL55E</strain>
    </source>
</reference>
<feature type="chain" id="PRO_0000303418" description="tRNA N6-adenosine threonylcarbamoyltransferase">
    <location>
        <begin position="1"/>
        <end position="344"/>
    </location>
</feature>
<feature type="binding site" evidence="1">
    <location>
        <position position="111"/>
    </location>
    <ligand>
        <name>Fe cation</name>
        <dbReference type="ChEBI" id="CHEBI:24875"/>
    </ligand>
</feature>
<feature type="binding site" evidence="1">
    <location>
        <position position="115"/>
    </location>
    <ligand>
        <name>Fe cation</name>
        <dbReference type="ChEBI" id="CHEBI:24875"/>
    </ligand>
</feature>
<feature type="binding site" evidence="1">
    <location>
        <begin position="136"/>
        <end position="140"/>
    </location>
    <ligand>
        <name>substrate</name>
    </ligand>
</feature>
<feature type="binding site" evidence="1">
    <location>
        <position position="169"/>
    </location>
    <ligand>
        <name>substrate</name>
    </ligand>
</feature>
<feature type="binding site" evidence="1">
    <location>
        <position position="182"/>
    </location>
    <ligand>
        <name>substrate</name>
    </ligand>
</feature>
<feature type="binding site" evidence="1">
    <location>
        <position position="279"/>
    </location>
    <ligand>
        <name>substrate</name>
    </ligand>
</feature>
<feature type="binding site" evidence="1">
    <location>
        <position position="307"/>
    </location>
    <ligand>
        <name>Fe cation</name>
        <dbReference type="ChEBI" id="CHEBI:24875"/>
    </ligand>
</feature>
<accession>Q65RP0</accession>
<gene>
    <name evidence="1" type="primary">tsaD</name>
    <name type="synonym">gcp</name>
    <name type="ordered locus">MS1763</name>
</gene>
<dbReference type="EC" id="2.3.1.234" evidence="1"/>
<dbReference type="EMBL" id="AE016827">
    <property type="protein sequence ID" value="AAU38370.1"/>
    <property type="molecule type" value="Genomic_DNA"/>
</dbReference>
<dbReference type="RefSeq" id="WP_011200928.1">
    <property type="nucleotide sequence ID" value="NC_006300.1"/>
</dbReference>
<dbReference type="SMR" id="Q65RP0"/>
<dbReference type="STRING" id="221988.MS1763"/>
<dbReference type="KEGG" id="msu:MS1763"/>
<dbReference type="eggNOG" id="COG0533">
    <property type="taxonomic scope" value="Bacteria"/>
</dbReference>
<dbReference type="HOGENOM" id="CLU_023208_0_0_6"/>
<dbReference type="OrthoDB" id="9806197at2"/>
<dbReference type="Proteomes" id="UP000000607">
    <property type="component" value="Chromosome"/>
</dbReference>
<dbReference type="GO" id="GO:0005737">
    <property type="term" value="C:cytoplasm"/>
    <property type="evidence" value="ECO:0007669"/>
    <property type="project" value="UniProtKB-SubCell"/>
</dbReference>
<dbReference type="GO" id="GO:0005506">
    <property type="term" value="F:iron ion binding"/>
    <property type="evidence" value="ECO:0007669"/>
    <property type="project" value="UniProtKB-UniRule"/>
</dbReference>
<dbReference type="GO" id="GO:0061711">
    <property type="term" value="F:N(6)-L-threonylcarbamoyladenine synthase activity"/>
    <property type="evidence" value="ECO:0007669"/>
    <property type="project" value="UniProtKB-EC"/>
</dbReference>
<dbReference type="GO" id="GO:0002949">
    <property type="term" value="P:tRNA threonylcarbamoyladenosine modification"/>
    <property type="evidence" value="ECO:0007669"/>
    <property type="project" value="UniProtKB-UniRule"/>
</dbReference>
<dbReference type="CDD" id="cd24133">
    <property type="entry name" value="ASKHA_NBD_TsaD_bac"/>
    <property type="match status" value="1"/>
</dbReference>
<dbReference type="FunFam" id="3.30.420.40:FF:000012">
    <property type="entry name" value="tRNA N6-adenosine threonylcarbamoyltransferase"/>
    <property type="match status" value="1"/>
</dbReference>
<dbReference type="FunFam" id="3.30.420.40:FF:000031">
    <property type="entry name" value="tRNA N6-adenosine threonylcarbamoyltransferase"/>
    <property type="match status" value="1"/>
</dbReference>
<dbReference type="Gene3D" id="3.30.420.40">
    <property type="match status" value="2"/>
</dbReference>
<dbReference type="HAMAP" id="MF_01445">
    <property type="entry name" value="TsaD"/>
    <property type="match status" value="1"/>
</dbReference>
<dbReference type="InterPro" id="IPR043129">
    <property type="entry name" value="ATPase_NBD"/>
</dbReference>
<dbReference type="InterPro" id="IPR000905">
    <property type="entry name" value="Gcp-like_dom"/>
</dbReference>
<dbReference type="InterPro" id="IPR017861">
    <property type="entry name" value="KAE1/TsaD"/>
</dbReference>
<dbReference type="InterPro" id="IPR017860">
    <property type="entry name" value="Peptidase_M22_CS"/>
</dbReference>
<dbReference type="InterPro" id="IPR022450">
    <property type="entry name" value="TsaD"/>
</dbReference>
<dbReference type="NCBIfam" id="TIGR00329">
    <property type="entry name" value="gcp_kae1"/>
    <property type="match status" value="1"/>
</dbReference>
<dbReference type="NCBIfam" id="TIGR03723">
    <property type="entry name" value="T6A_TsaD_YgjD"/>
    <property type="match status" value="1"/>
</dbReference>
<dbReference type="PANTHER" id="PTHR11735">
    <property type="entry name" value="TRNA N6-ADENOSINE THREONYLCARBAMOYLTRANSFERASE"/>
    <property type="match status" value="1"/>
</dbReference>
<dbReference type="PANTHER" id="PTHR11735:SF6">
    <property type="entry name" value="TRNA N6-ADENOSINE THREONYLCARBAMOYLTRANSFERASE, MITOCHONDRIAL"/>
    <property type="match status" value="1"/>
</dbReference>
<dbReference type="Pfam" id="PF00814">
    <property type="entry name" value="TsaD"/>
    <property type="match status" value="1"/>
</dbReference>
<dbReference type="PRINTS" id="PR00789">
    <property type="entry name" value="OSIALOPTASE"/>
</dbReference>
<dbReference type="SUPFAM" id="SSF53067">
    <property type="entry name" value="Actin-like ATPase domain"/>
    <property type="match status" value="1"/>
</dbReference>
<dbReference type="PROSITE" id="PS01016">
    <property type="entry name" value="GLYCOPROTEASE"/>
    <property type="match status" value="1"/>
</dbReference>
<protein>
    <recommendedName>
        <fullName evidence="1">tRNA N6-adenosine threonylcarbamoyltransferase</fullName>
        <ecNumber evidence="1">2.3.1.234</ecNumber>
    </recommendedName>
    <alternativeName>
        <fullName evidence="1">N6-L-threonylcarbamoyladenine synthase</fullName>
        <shortName evidence="1">t(6)A synthase</shortName>
    </alternativeName>
    <alternativeName>
        <fullName evidence="1">t(6)A37 threonylcarbamoyladenosine biosynthesis protein TsaD</fullName>
    </alternativeName>
    <alternativeName>
        <fullName evidence="1">tRNA threonylcarbamoyladenosine biosynthesis protein TsaD</fullName>
    </alternativeName>
</protein>
<comment type="function">
    <text evidence="1">Required for the formation of a threonylcarbamoyl group on adenosine at position 37 (t(6)A37) in tRNAs that read codons beginning with adenine. Is involved in the transfer of the threonylcarbamoyl moiety of threonylcarbamoyl-AMP (TC-AMP) to the N6 group of A37, together with TsaE and TsaB. TsaD likely plays a direct catalytic role in this reaction.</text>
</comment>
<comment type="catalytic activity">
    <reaction evidence="1">
        <text>L-threonylcarbamoyladenylate + adenosine(37) in tRNA = N(6)-L-threonylcarbamoyladenosine(37) in tRNA + AMP + H(+)</text>
        <dbReference type="Rhea" id="RHEA:37059"/>
        <dbReference type="Rhea" id="RHEA-COMP:10162"/>
        <dbReference type="Rhea" id="RHEA-COMP:10163"/>
        <dbReference type="ChEBI" id="CHEBI:15378"/>
        <dbReference type="ChEBI" id="CHEBI:73682"/>
        <dbReference type="ChEBI" id="CHEBI:74411"/>
        <dbReference type="ChEBI" id="CHEBI:74418"/>
        <dbReference type="ChEBI" id="CHEBI:456215"/>
        <dbReference type="EC" id="2.3.1.234"/>
    </reaction>
</comment>
<comment type="cofactor">
    <cofactor evidence="1">
        <name>Fe(2+)</name>
        <dbReference type="ChEBI" id="CHEBI:29033"/>
    </cofactor>
    <text evidence="1">Binds 1 Fe(2+) ion per subunit.</text>
</comment>
<comment type="subcellular location">
    <subcellularLocation>
        <location evidence="1">Cytoplasm</location>
    </subcellularLocation>
</comment>
<comment type="similarity">
    <text evidence="1">Belongs to the KAE1 / TsaD family.</text>
</comment>